<gene>
    <name evidence="1" type="primary">rpmF</name>
    <name type="ordered locus">Mmwyl1_2129</name>
</gene>
<comment type="similarity">
    <text evidence="1">Belongs to the bacterial ribosomal protein bL32 family.</text>
</comment>
<evidence type="ECO:0000255" key="1">
    <source>
        <dbReference type="HAMAP-Rule" id="MF_00340"/>
    </source>
</evidence>
<evidence type="ECO:0000256" key="2">
    <source>
        <dbReference type="SAM" id="MobiDB-lite"/>
    </source>
</evidence>
<evidence type="ECO:0000305" key="3"/>
<sequence>MAVQKSKVTRSRRGQRRSHDALTGPTLSVDKTTGELHRRHHVSADGFYRGRQVITPKGE</sequence>
<name>RL32_MARMS</name>
<keyword id="KW-0687">Ribonucleoprotein</keyword>
<keyword id="KW-0689">Ribosomal protein</keyword>
<accession>A6VX72</accession>
<protein>
    <recommendedName>
        <fullName evidence="1">Large ribosomal subunit protein bL32</fullName>
    </recommendedName>
    <alternativeName>
        <fullName evidence="3">50S ribosomal protein L32</fullName>
    </alternativeName>
</protein>
<feature type="chain" id="PRO_1000079333" description="Large ribosomal subunit protein bL32">
    <location>
        <begin position="1"/>
        <end position="59"/>
    </location>
</feature>
<feature type="region of interest" description="Disordered" evidence="2">
    <location>
        <begin position="1"/>
        <end position="34"/>
    </location>
</feature>
<feature type="compositionally biased region" description="Basic residues" evidence="2">
    <location>
        <begin position="7"/>
        <end position="16"/>
    </location>
</feature>
<proteinExistence type="inferred from homology"/>
<dbReference type="EMBL" id="CP000749">
    <property type="protein sequence ID" value="ABR71051.1"/>
    <property type="molecule type" value="Genomic_DNA"/>
</dbReference>
<dbReference type="SMR" id="A6VX72"/>
<dbReference type="STRING" id="400668.Mmwyl1_2129"/>
<dbReference type="KEGG" id="mmw:Mmwyl1_2129"/>
<dbReference type="eggNOG" id="COG0333">
    <property type="taxonomic scope" value="Bacteria"/>
</dbReference>
<dbReference type="HOGENOM" id="CLU_129084_2_1_6"/>
<dbReference type="OrthoDB" id="9801927at2"/>
<dbReference type="GO" id="GO:0015934">
    <property type="term" value="C:large ribosomal subunit"/>
    <property type="evidence" value="ECO:0007669"/>
    <property type="project" value="InterPro"/>
</dbReference>
<dbReference type="GO" id="GO:0003735">
    <property type="term" value="F:structural constituent of ribosome"/>
    <property type="evidence" value="ECO:0007669"/>
    <property type="project" value="InterPro"/>
</dbReference>
<dbReference type="GO" id="GO:0006412">
    <property type="term" value="P:translation"/>
    <property type="evidence" value="ECO:0007669"/>
    <property type="project" value="UniProtKB-UniRule"/>
</dbReference>
<dbReference type="HAMAP" id="MF_00340">
    <property type="entry name" value="Ribosomal_bL32"/>
    <property type="match status" value="1"/>
</dbReference>
<dbReference type="InterPro" id="IPR002677">
    <property type="entry name" value="Ribosomal_bL32"/>
</dbReference>
<dbReference type="InterPro" id="IPR044957">
    <property type="entry name" value="Ribosomal_bL32_bact"/>
</dbReference>
<dbReference type="InterPro" id="IPR011332">
    <property type="entry name" value="Ribosomal_zn-bd"/>
</dbReference>
<dbReference type="NCBIfam" id="TIGR01031">
    <property type="entry name" value="rpmF_bact"/>
    <property type="match status" value="1"/>
</dbReference>
<dbReference type="PANTHER" id="PTHR35534">
    <property type="entry name" value="50S RIBOSOMAL PROTEIN L32"/>
    <property type="match status" value="1"/>
</dbReference>
<dbReference type="PANTHER" id="PTHR35534:SF1">
    <property type="entry name" value="LARGE RIBOSOMAL SUBUNIT PROTEIN BL32"/>
    <property type="match status" value="1"/>
</dbReference>
<dbReference type="Pfam" id="PF01783">
    <property type="entry name" value="Ribosomal_L32p"/>
    <property type="match status" value="1"/>
</dbReference>
<dbReference type="SUPFAM" id="SSF57829">
    <property type="entry name" value="Zn-binding ribosomal proteins"/>
    <property type="match status" value="1"/>
</dbReference>
<reference key="1">
    <citation type="submission" date="2007-06" db="EMBL/GenBank/DDBJ databases">
        <title>Complete sequence of Marinomonas sp. MWYL1.</title>
        <authorList>
            <consortium name="US DOE Joint Genome Institute"/>
            <person name="Copeland A."/>
            <person name="Lucas S."/>
            <person name="Lapidus A."/>
            <person name="Barry K."/>
            <person name="Glavina del Rio T."/>
            <person name="Dalin E."/>
            <person name="Tice H."/>
            <person name="Pitluck S."/>
            <person name="Kiss H."/>
            <person name="Brettin T."/>
            <person name="Bruce D."/>
            <person name="Detter J.C."/>
            <person name="Han C."/>
            <person name="Schmutz J."/>
            <person name="Larimer F."/>
            <person name="Land M."/>
            <person name="Hauser L."/>
            <person name="Kyrpides N."/>
            <person name="Kim E."/>
            <person name="Johnston A.W.B."/>
            <person name="Todd J.D."/>
            <person name="Rogers R."/>
            <person name="Wexler M."/>
            <person name="Bond P.L."/>
            <person name="Li Y."/>
            <person name="Richardson P."/>
        </authorList>
    </citation>
    <scope>NUCLEOTIDE SEQUENCE [LARGE SCALE GENOMIC DNA]</scope>
    <source>
        <strain>MWYL1</strain>
    </source>
</reference>
<organism>
    <name type="scientific">Marinomonas sp. (strain MWYL1)</name>
    <dbReference type="NCBI Taxonomy" id="400668"/>
    <lineage>
        <taxon>Bacteria</taxon>
        <taxon>Pseudomonadati</taxon>
        <taxon>Pseudomonadota</taxon>
        <taxon>Gammaproteobacteria</taxon>
        <taxon>Oceanospirillales</taxon>
        <taxon>Oceanospirillaceae</taxon>
        <taxon>Marinomonas</taxon>
    </lineage>
</organism>